<dbReference type="SMR" id="P0DV31"/>
<dbReference type="GO" id="GO:0005576">
    <property type="term" value="C:extracellular region"/>
    <property type="evidence" value="ECO:0007669"/>
    <property type="project" value="UniProtKB-SubCell"/>
</dbReference>
<dbReference type="GO" id="GO:0005246">
    <property type="term" value="F:calcium channel regulator activity"/>
    <property type="evidence" value="ECO:0007669"/>
    <property type="project" value="UniProtKB-KW"/>
</dbReference>
<dbReference type="GO" id="GO:0019871">
    <property type="term" value="F:sodium channel inhibitor activity"/>
    <property type="evidence" value="ECO:0007669"/>
    <property type="project" value="InterPro"/>
</dbReference>
<dbReference type="GO" id="GO:0090729">
    <property type="term" value="F:toxin activity"/>
    <property type="evidence" value="ECO:0007669"/>
    <property type="project" value="UniProtKB-KW"/>
</dbReference>
<dbReference type="InterPro" id="IPR012627">
    <property type="entry name" value="Toxin_22"/>
</dbReference>
<dbReference type="Pfam" id="PF08092">
    <property type="entry name" value="Toxin_22"/>
    <property type="match status" value="1"/>
</dbReference>
<evidence type="ECO:0000255" key="1"/>
<evidence type="ECO:0000269" key="2">
    <source>
    </source>
</evidence>
<evidence type="ECO:0000303" key="3">
    <source>
    </source>
</evidence>
<evidence type="ECO:0000305" key="4"/>
<evidence type="ECO:0000305" key="5">
    <source>
    </source>
</evidence>
<protein>
    <recommendedName>
        <fullName evidence="3">Omega toxin Ap2</fullName>
    </recommendedName>
</protein>
<comment type="function">
    <text evidence="2">Inhibits 31.17% of Cav2.1/CACNA1A current at 1 uM concentration.</text>
</comment>
<comment type="subcellular location">
    <subcellularLocation>
        <location evidence="2">Secreted</location>
    </subcellularLocation>
</comment>
<comment type="tissue specificity">
    <text evidence="5">Expressed by the venom duct.</text>
</comment>
<comment type="domain">
    <text evidence="4">The presence of a 'disulfide through disulfide knot' structurally defines this protein as a knottin.</text>
</comment>
<comment type="mass spectrometry" mass="4886.3" method="MALDI" evidence="2">
    <text>Monoisotopic mass.</text>
</comment>
<comment type="miscellaneous">
    <text evidence="2">Negative results: does not show activity on Nav1.1/SCN1A, Nav1.5/SCN5A, Nav1.7/SCN9A, Cav1.2/CACNA1C, and Cav2.2/CACNA1B.</text>
</comment>
<comment type="similarity">
    <text evidence="4">Belongs to the neurotoxin 14 (magi-1) family. 08 (Ltx-4) subfamily.</text>
</comment>
<keyword id="KW-0027">Amidation</keyword>
<keyword id="KW-0108">Calcium channel impairing toxin</keyword>
<keyword id="KW-0903">Direct protein sequencing</keyword>
<keyword id="KW-1015">Disulfide bond</keyword>
<keyword id="KW-0872">Ion channel impairing toxin</keyword>
<keyword id="KW-0964">Secreted</keyword>
<keyword id="KW-0732">Signal</keyword>
<keyword id="KW-0800">Toxin</keyword>
<keyword id="KW-1218">Voltage-gated calcium channel impairing toxin</keyword>
<feature type="signal peptide" evidence="1">
    <location>
        <begin position="1"/>
        <end position="22"/>
    </location>
</feature>
<feature type="propeptide" id="PRO_0000454751" evidence="5">
    <location>
        <begin position="23"/>
        <end position="57"/>
    </location>
</feature>
<feature type="chain" id="PRO_0000454752" description="Omega toxin Ap2" evidence="5">
    <location>
        <begin position="58"/>
        <end position="99"/>
    </location>
</feature>
<feature type="modified residue" description="Serine amide" evidence="2">
    <location>
        <position position="99"/>
    </location>
</feature>
<feature type="disulfide bond" evidence="5">
    <location>
        <begin position="58"/>
        <end position="74"/>
    </location>
</feature>
<feature type="disulfide bond" evidence="5">
    <location>
        <begin position="65"/>
        <end position="79"/>
    </location>
</feature>
<feature type="disulfide bond" evidence="5">
    <location>
        <begin position="73"/>
        <end position="94"/>
    </location>
</feature>
<reference key="1">
    <citation type="journal article" date="2021" name="Peptides">
        <title>Purification and characterization of peptides Ap2, Ap3 and Ap5 (omega-toxins) from the venom of the Brazilian tarantula Acanthoscurria paulensis.</title>
        <authorList>
            <person name="Tibery D.V."/>
            <person name="de Souza A.C.B."/>
            <person name="Mourao C.B.F."/>
            <person name="do Nascimento J.M."/>
            <person name="Schwartz E.F."/>
        </authorList>
    </citation>
    <scope>NUCLEOTIDE SEQUENCE [MRNA]</scope>
    <scope>PARTIAL PROTEIN SEQUENCE</scope>
    <scope>FUNCTION</scope>
    <scope>MASS SPECTROMETRY</scope>
    <scope>SUBCELLULAR LOCATION</scope>
    <scope>AMIDATION AT SER-99</scope>
    <source>
        <tissue>Venom</tissue>
        <tissue>Venom gland</tissue>
    </source>
</reference>
<proteinExistence type="evidence at protein level"/>
<sequence length="100" mass="11253">MNTTQVILFAVVLVLTVTVGQADEDSAETSLLRKLEEAEASMFGQYLEESKNSPEQRCAGENVPCDKDRPGDCCSRYECLKPTGYGWWYASYYCYKKKSG</sequence>
<name>TX2_ACAPA</name>
<accession>P0DV31</accession>
<organism>
    <name type="scientific">Acanthoscurria paulensis</name>
    <name type="common">Brazilian giant black tarantula spider</name>
    <dbReference type="NCBI Taxonomy" id="1264770"/>
    <lineage>
        <taxon>Eukaryota</taxon>
        <taxon>Metazoa</taxon>
        <taxon>Ecdysozoa</taxon>
        <taxon>Arthropoda</taxon>
        <taxon>Chelicerata</taxon>
        <taxon>Arachnida</taxon>
        <taxon>Araneae</taxon>
        <taxon>Mygalomorphae</taxon>
        <taxon>Theraphosidae</taxon>
        <taxon>Acanthoscurria</taxon>
    </lineage>
</organism>